<accession>P40468</accession>
<accession>D6VVF8</accession>
<accession>Q45T93</accession>
<organism>
    <name type="scientific">Saccharomyces cerevisiae (strain ATCC 204508 / S288c)</name>
    <name type="common">Baker's yeast</name>
    <dbReference type="NCBI Taxonomy" id="559292"/>
    <lineage>
        <taxon>Eukaryota</taxon>
        <taxon>Fungi</taxon>
        <taxon>Dikarya</taxon>
        <taxon>Ascomycota</taxon>
        <taxon>Saccharomycotina</taxon>
        <taxon>Saccharomycetes</taxon>
        <taxon>Saccharomycetales</taxon>
        <taxon>Saccharomycetaceae</taxon>
        <taxon>Saccharomyces</taxon>
    </lineage>
</organism>
<name>TAO3_YEAST</name>
<dbReference type="EMBL" id="DQ116812">
    <property type="protein sequence ID" value="AAZ23264.1"/>
    <property type="molecule type" value="Genomic_DNA"/>
</dbReference>
<dbReference type="EMBL" id="DQ116814">
    <property type="protein sequence ID" value="AAZ23266.1"/>
    <property type="molecule type" value="Genomic_DNA"/>
</dbReference>
<dbReference type="EMBL" id="DQ116817">
    <property type="protein sequence ID" value="AAZ23269.1"/>
    <property type="molecule type" value="Genomic_DNA"/>
</dbReference>
<dbReference type="EMBL" id="DQ116824">
    <property type="protein sequence ID" value="AAZ23276.1"/>
    <property type="molecule type" value="Genomic_DNA"/>
</dbReference>
<dbReference type="EMBL" id="Z38059">
    <property type="protein sequence ID" value="CAA86149.1"/>
    <property type="molecule type" value="Genomic_DNA"/>
</dbReference>
<dbReference type="EMBL" id="BK006942">
    <property type="protein sequence ID" value="DAA08424.1"/>
    <property type="molecule type" value="Genomic_DNA"/>
</dbReference>
<dbReference type="PIR" id="S48405">
    <property type="entry name" value="S48405"/>
</dbReference>
<dbReference type="RefSeq" id="NP_012137.3">
    <property type="nucleotide sequence ID" value="NM_001179477.3"/>
</dbReference>
<dbReference type="SMR" id="P40468"/>
<dbReference type="BioGRID" id="34862">
    <property type="interactions" value="679"/>
</dbReference>
<dbReference type="DIP" id="DIP-5950N"/>
<dbReference type="FunCoup" id="P40468">
    <property type="interactions" value="838"/>
</dbReference>
<dbReference type="IntAct" id="P40468">
    <property type="interactions" value="19"/>
</dbReference>
<dbReference type="MINT" id="P40468"/>
<dbReference type="STRING" id="4932.YIL129C"/>
<dbReference type="iPTMnet" id="P40468"/>
<dbReference type="PaxDb" id="4932-YIL129C"/>
<dbReference type="PeptideAtlas" id="P40468"/>
<dbReference type="EnsemblFungi" id="YIL129C_mRNA">
    <property type="protein sequence ID" value="YIL129C"/>
    <property type="gene ID" value="YIL129C"/>
</dbReference>
<dbReference type="GeneID" id="854677"/>
<dbReference type="KEGG" id="sce:YIL129C"/>
<dbReference type="AGR" id="SGD:S000001391"/>
<dbReference type="SGD" id="S000001391">
    <property type="gene designation" value="TAO3"/>
</dbReference>
<dbReference type="VEuPathDB" id="FungiDB:YIL129C"/>
<dbReference type="eggNOG" id="KOG1825">
    <property type="taxonomic scope" value="Eukaryota"/>
</dbReference>
<dbReference type="GeneTree" id="ENSGT00610000086058"/>
<dbReference type="HOGENOM" id="CLU_000325_0_0_1"/>
<dbReference type="InParanoid" id="P40468"/>
<dbReference type="OMA" id="CGVLCMQ"/>
<dbReference type="OrthoDB" id="6287725at2759"/>
<dbReference type="BioCyc" id="YEAST:G3O-31380-MONOMER"/>
<dbReference type="BioGRID-ORCS" id="854677">
    <property type="hits" value="3 hits in 10 CRISPR screens"/>
</dbReference>
<dbReference type="CD-CODE" id="E03F929F">
    <property type="entry name" value="Stress granule"/>
</dbReference>
<dbReference type="PRO" id="PR:P40468"/>
<dbReference type="Proteomes" id="UP000002311">
    <property type="component" value="Chromosome IX"/>
</dbReference>
<dbReference type="RNAct" id="P40468">
    <property type="molecule type" value="protein"/>
</dbReference>
<dbReference type="GO" id="GO:0005938">
    <property type="term" value="C:cell cortex"/>
    <property type="evidence" value="ECO:0000318"/>
    <property type="project" value="GO_Central"/>
</dbReference>
<dbReference type="GO" id="GO:0005933">
    <property type="term" value="C:cellular bud"/>
    <property type="evidence" value="ECO:0000314"/>
    <property type="project" value="SGD"/>
</dbReference>
<dbReference type="GO" id="GO:0000131">
    <property type="term" value="C:incipient cellular bud site"/>
    <property type="evidence" value="ECO:0000314"/>
    <property type="project" value="SGD"/>
</dbReference>
<dbReference type="GO" id="GO:0043332">
    <property type="term" value="C:mating projection tip"/>
    <property type="evidence" value="ECO:0000314"/>
    <property type="project" value="SGD"/>
</dbReference>
<dbReference type="GO" id="GO:0005739">
    <property type="term" value="C:mitochondrion"/>
    <property type="evidence" value="ECO:0007005"/>
    <property type="project" value="SGD"/>
</dbReference>
<dbReference type="GO" id="GO:0030427">
    <property type="term" value="C:site of polarized growth"/>
    <property type="evidence" value="ECO:0000318"/>
    <property type="project" value="GO_Central"/>
</dbReference>
<dbReference type="GO" id="GO:0007118">
    <property type="term" value="P:budding cell apical bud growth"/>
    <property type="evidence" value="ECO:0000315"/>
    <property type="project" value="SGD"/>
</dbReference>
<dbReference type="GO" id="GO:0007114">
    <property type="term" value="P:cell budding"/>
    <property type="evidence" value="ECO:0000315"/>
    <property type="project" value="SGD"/>
</dbReference>
<dbReference type="GO" id="GO:0000902">
    <property type="term" value="P:cell morphogenesis"/>
    <property type="evidence" value="ECO:0000315"/>
    <property type="project" value="SGD"/>
</dbReference>
<dbReference type="InterPro" id="IPR016024">
    <property type="entry name" value="ARM-type_fold"/>
</dbReference>
<dbReference type="InterPro" id="IPR025614">
    <property type="entry name" value="Cell_morpho_N"/>
</dbReference>
<dbReference type="InterPro" id="IPR025481">
    <property type="entry name" value="Cell_Morphogen_C"/>
</dbReference>
<dbReference type="InterPro" id="IPR039867">
    <property type="entry name" value="Furry/Tao3/Mor2"/>
</dbReference>
<dbReference type="InterPro" id="IPR029473">
    <property type="entry name" value="MOR2-PAG1_mid"/>
</dbReference>
<dbReference type="PANTHER" id="PTHR12295">
    <property type="entry name" value="FURRY-RELATED"/>
    <property type="match status" value="1"/>
</dbReference>
<dbReference type="PANTHER" id="PTHR12295:SF30">
    <property type="entry name" value="PROTEIN FURRY"/>
    <property type="match status" value="1"/>
</dbReference>
<dbReference type="Pfam" id="PF14225">
    <property type="entry name" value="MOR2-PAG1_C"/>
    <property type="match status" value="1"/>
</dbReference>
<dbReference type="Pfam" id="PF14228">
    <property type="entry name" value="MOR2-PAG1_mid"/>
    <property type="match status" value="3"/>
</dbReference>
<dbReference type="Pfam" id="PF14222">
    <property type="entry name" value="MOR2-PAG1_N"/>
    <property type="match status" value="1"/>
</dbReference>
<dbReference type="SUPFAM" id="SSF48371">
    <property type="entry name" value="ARM repeat"/>
    <property type="match status" value="2"/>
</dbReference>
<feature type="chain" id="PRO_0000072430" description="Cell morphogenesis protein PAG1">
    <location>
        <begin position="1"/>
        <end position="2376"/>
    </location>
</feature>
<feature type="region of interest" description="Disordered" evidence="1">
    <location>
        <begin position="1"/>
        <end position="30"/>
    </location>
</feature>
<feature type="region of interest" description="Disordered" evidence="1">
    <location>
        <begin position="275"/>
        <end position="294"/>
    </location>
</feature>
<feature type="modified residue" description="Phosphoserine" evidence="7">
    <location>
        <position position="141"/>
    </location>
</feature>
<feature type="modified residue" description="Phosphoserine" evidence="8">
    <location>
        <position position="1144"/>
    </location>
</feature>
<feature type="modified residue" description="Phosphothreonine" evidence="6 7 8">
    <location>
        <position position="2264"/>
    </location>
</feature>
<feature type="modified residue" description="Phosphoserine" evidence="6">
    <location>
        <position position="2267"/>
    </location>
</feature>
<feature type="modified residue" description="Phosphoserine" evidence="5">
    <location>
        <position position="2355"/>
    </location>
</feature>
<keyword id="KW-0597">Phosphoprotein</keyword>
<keyword id="KW-1185">Reference proteome</keyword>
<reference key="1">
    <citation type="journal article" date="2005" name="Nat. Genet.">
        <title>Quantitative trait loci mapped to single-nucleotide resolution in yeast.</title>
        <authorList>
            <person name="Deutschbauer A.M."/>
            <person name="Davis R.W."/>
        </authorList>
    </citation>
    <scope>NUCLEOTIDE SEQUENCE [GENOMIC DNA]</scope>
    <source>
        <strain>ATCC 200060 / W303</strain>
        <strain>ATCC 204508 / S288c</strain>
        <strain>ATCC 204626 / S288c / A364A</strain>
        <strain>Sigma 1278B</strain>
    </source>
</reference>
<reference key="2">
    <citation type="journal article" date="1997" name="Nature">
        <title>The nucleotide sequence of Saccharomyces cerevisiae chromosome IX.</title>
        <authorList>
            <person name="Churcher C.M."/>
            <person name="Bowman S."/>
            <person name="Badcock K."/>
            <person name="Bankier A.T."/>
            <person name="Brown D."/>
            <person name="Chillingworth T."/>
            <person name="Connor R."/>
            <person name="Devlin K."/>
            <person name="Gentles S."/>
            <person name="Hamlin N."/>
            <person name="Harris D.E."/>
            <person name="Horsnell T."/>
            <person name="Hunt S."/>
            <person name="Jagels K."/>
            <person name="Jones M."/>
            <person name="Lye G."/>
            <person name="Moule S."/>
            <person name="Odell C."/>
            <person name="Pearson D."/>
            <person name="Rajandream M.A."/>
            <person name="Rice P."/>
            <person name="Rowley N."/>
            <person name="Skelton J."/>
            <person name="Smith V."/>
            <person name="Walsh S.V."/>
            <person name="Whitehead S."/>
            <person name="Barrell B.G."/>
        </authorList>
    </citation>
    <scope>NUCLEOTIDE SEQUENCE [LARGE SCALE GENOMIC DNA]</scope>
    <source>
        <strain>ATCC 204508 / S288c</strain>
    </source>
</reference>
<reference key="3">
    <citation type="journal article" date="2014" name="G3 (Bethesda)">
        <title>The reference genome sequence of Saccharomyces cerevisiae: Then and now.</title>
        <authorList>
            <person name="Engel S.R."/>
            <person name="Dietrich F.S."/>
            <person name="Fisk D.G."/>
            <person name="Binkley G."/>
            <person name="Balakrishnan R."/>
            <person name="Costanzo M.C."/>
            <person name="Dwight S.S."/>
            <person name="Hitz B.C."/>
            <person name="Karra K."/>
            <person name="Nash R.S."/>
            <person name="Weng S."/>
            <person name="Wong E.D."/>
            <person name="Lloyd P."/>
            <person name="Skrzypek M.S."/>
            <person name="Miyasato S.R."/>
            <person name="Simison M."/>
            <person name="Cherry J.M."/>
        </authorList>
    </citation>
    <scope>GENOME REANNOTATION</scope>
    <source>
        <strain>ATCC 204508 / S288c</strain>
    </source>
</reference>
<reference key="4">
    <citation type="journal article" date="2002" name="Mol. Biol. Cell">
        <title>Pag1p, a novel protein associated with protein kinase Cbk1p, is required for cell morphogenesis and proliferation in Saccharomyces cerevisiae.</title>
        <authorList>
            <person name="Du L.L."/>
            <person name="Novick P."/>
        </authorList>
    </citation>
    <scope>FUNCTION</scope>
    <scope>INTERACTION WITH CBK1</scope>
</reference>
<reference key="5">
    <citation type="journal article" date="2003" name="Nature">
        <title>Global analysis of protein expression in yeast.</title>
        <authorList>
            <person name="Ghaemmaghami S."/>
            <person name="Huh W.-K."/>
            <person name="Bower K."/>
            <person name="Howson R.W."/>
            <person name="Belle A."/>
            <person name="Dephoure N."/>
            <person name="O'Shea E.K."/>
            <person name="Weissman J.S."/>
        </authorList>
    </citation>
    <scope>LEVEL OF PROTEIN EXPRESSION [LARGE SCALE ANALYSIS]</scope>
</reference>
<reference key="6">
    <citation type="journal article" date="2007" name="J. Proteome Res.">
        <title>Large-scale phosphorylation analysis of alpha-factor-arrested Saccharomyces cerevisiae.</title>
        <authorList>
            <person name="Li X."/>
            <person name="Gerber S.A."/>
            <person name="Rudner A.D."/>
            <person name="Beausoleil S.A."/>
            <person name="Haas W."/>
            <person name="Villen J."/>
            <person name="Elias J.E."/>
            <person name="Gygi S.P."/>
        </authorList>
    </citation>
    <scope>PHOSPHORYLATION [LARGE SCALE ANALYSIS] AT THR-2264 AND SER-2267</scope>
    <scope>IDENTIFICATION BY MASS SPECTROMETRY [LARGE SCALE ANALYSIS]</scope>
    <source>
        <strain>ADR376</strain>
    </source>
</reference>
<reference key="7">
    <citation type="journal article" date="2007" name="Proc. Natl. Acad. Sci. U.S.A.">
        <title>Analysis of phosphorylation sites on proteins from Saccharomyces cerevisiae by electron transfer dissociation (ETD) mass spectrometry.</title>
        <authorList>
            <person name="Chi A."/>
            <person name="Huttenhower C."/>
            <person name="Geer L.Y."/>
            <person name="Coon J.J."/>
            <person name="Syka J.E.P."/>
            <person name="Bai D.L."/>
            <person name="Shabanowitz J."/>
            <person name="Burke D.J."/>
            <person name="Troyanskaya O.G."/>
            <person name="Hunt D.F."/>
        </authorList>
    </citation>
    <scope>PHOSPHORYLATION [LARGE SCALE ANALYSIS] AT SER-2355</scope>
    <scope>IDENTIFICATION BY MASS SPECTROMETRY [LARGE SCALE ANALYSIS]</scope>
</reference>
<reference key="8">
    <citation type="journal article" date="2008" name="Mol. Cell. Proteomics">
        <title>A multidimensional chromatography technology for in-depth phosphoproteome analysis.</title>
        <authorList>
            <person name="Albuquerque C.P."/>
            <person name="Smolka M.B."/>
            <person name="Payne S.H."/>
            <person name="Bafna V."/>
            <person name="Eng J."/>
            <person name="Zhou H."/>
        </authorList>
    </citation>
    <scope>PHOSPHORYLATION [LARGE SCALE ANALYSIS] AT SER-141 AND THR-2264</scope>
    <scope>IDENTIFICATION BY MASS SPECTROMETRY [LARGE SCALE ANALYSIS]</scope>
</reference>
<reference key="9">
    <citation type="journal article" date="2009" name="Science">
        <title>Global analysis of Cdk1 substrate phosphorylation sites provides insights into evolution.</title>
        <authorList>
            <person name="Holt L.J."/>
            <person name="Tuch B.B."/>
            <person name="Villen J."/>
            <person name="Johnson A.D."/>
            <person name="Gygi S.P."/>
            <person name="Morgan D.O."/>
        </authorList>
    </citation>
    <scope>PHOSPHORYLATION [LARGE SCALE ANALYSIS] AT SER-1144 AND THR-2264</scope>
    <scope>IDENTIFICATION BY MASS SPECTROMETRY [LARGE SCALE ANALYSIS]</scope>
</reference>
<gene>
    <name type="primary">TAO3</name>
    <name type="synonym">PAG1</name>
    <name type="ordered locus">YIL129C</name>
</gene>
<protein>
    <recommendedName>
        <fullName>Cell morphogenesis protein PAG1</fullName>
    </recommendedName>
    <alternativeName>
        <fullName>Protein TAO3</fullName>
    </alternativeName>
</protein>
<comment type="function">
    <text evidence="2">Seems to play a role in cell morphogenesis.</text>
</comment>
<comment type="subunit">
    <text>Associates with CBK1.</text>
</comment>
<comment type="interaction">
    <interactant intactId="EBI-18961">
        <id>P40468</id>
    </interactant>
    <interactant intactId="EBI-4110">
        <id>P53894</id>
        <label>CBK1</label>
    </interactant>
    <organismsDiffer>false</organismsDiffer>
    <experiments>9</experiments>
</comment>
<comment type="miscellaneous">
    <text evidence="3">Present with 206 molecules/cell in log phase SD medium.</text>
</comment>
<comment type="similarity">
    <text evidence="4">To S.pombe mor2.</text>
</comment>
<sequence length="2376" mass="269858">MASRFTFPPQRDQGIGFTFPPTNKAEGSSNNNQISIDIDPSGQDVLEEINEAPLNTFPLHQSVTDAPIIDIPSPTDMSEGTSLNNQLLLRQQQQQGTGEGQALPPTFVEEQSDQNKISMLLPEQKQQRMQESAPPDITAKSVAEDYVTTLRQQMATDWKSPSEYALHILFTKFIRYAENKLNMCLQQLDMAEPPIVEILGEGVDPSFDEIIKSLGHIAKKKPKPVIDAMMFWRKTKSEAANSASEEMEKLLKEYEFEKAHPSQAHFLMNRRLSRSSSNTTSKYKHNNNTNNLPGMKRHVSSSFNNKVPLIKASSSNNSATSSPSIANSQLKSLENTIEVAKEEAFLADRKSLISIYILCRVLNEIVKQASSNEEEDLSDKLEEIVFTQLKTTDPLSISTSLIKSSNWNSFAELLGSMSEKKFLSVSDRFIADLEKIPAYIPPELEPSTHLLILGMRYLKLRNYPLEKFEESADFMKSLSKFFAKTENFPVCLAYAEVTNQLLLPLAGSLTAEVNHPTWVEAMSTLLNTAKRLQADSKYWVSGFKLTVSILCASPPDLFSKQWLSLLEANASKVKSKSLNERIIFAVGLSRLVWVYLYRCPETLNNTTRTLTKLLQLYLNTRKKENWITGDFGLLNPLTDALISIGFLHPNFLMEQALIPLIRQSFNGSNLENINYEKLILTINTYKGLLVTKERPRFPEDDNRLYELNLNNITVNQVQEASSINHTEISDYFYKLFLLLDSSIGSEVWSPENQHQKQSSNAFSPFGFSFSNDNDSSKNKSLYVILFGTIIEAIPCCLSISRTIPYKSTIEILSRNAVHSEVIISSSSQNALRALASKKNPYTLITWFAKYSFDFDEKTQSSYNMSYLSSKEYNRLLILYVELLECWLEEFQSSNKEENKKETGLDGIRLLPIDAEQEESNETEKLEWKNTVTVIEEVEGNGLFFLCSHDAKIRRLGIQILRIIFKFDEAMMEKTEKLSNGHSRSSSHFAADRGTRLIDLLNECNTTTLINPHKATLSAVEKTRFSRLNSKYKRGLLIKLAESEYGVDAALWQRAFPKLLALVFKTCPMAMALCRSIVCIRLVQVHEIILRVANDVDFKLKNVLPETIVNQWKLYLIAACTSLTSTFDQKLHIPSNIPQHGRKKSQQIFTVQHQKIKSAKSIFKMVLPLLNAKYIMIRDAIITGLSSMNINIFKAYVEAIDVFLVAWKEGSSNNQIRVEMFHILTILSPYLKSDMIFNDEWILRKLSEFLQKTKQFLEKDSVQISYEYQSLRSYFAGLILSYYMAVREHPLIDELFPFQARASCFNFLKEWCGYGEYEPISEERYAIMIKNTESGRDRTAITTGIEFQKNRLQMIVLETMVVLCSDPITQTLDDDLELPIVISFDTEDLLAWIEALFDSDNTTVKNLGVRALENLLDKNRENFKLFRDVAFQCVSHHSHPSVAVLYYTTLCKSVLKLDNLVLDEDELVSLGLYGLVADKEDTRTFAVDLLSAVETKLHNSSYTKVFKERLANSSKTVYKSTAKEISSIFAELLSQDLCLRIFSSLVRILDLFPFEIKRDLLVLMVPWVNKFTLKSLEELDTFMVLNNLFYITIDLNDSLPNEVEQLWISLGKGNSFQNIHVSLEYIINSSMNHCNPLFVQYARDIVLYLANIPGGIGLLDTLLNNLEPKYMVPLAKHTFNEPMNNNKYSFLGNIWERLNYNGKRIIFSKAQLSIIFLVNLLTNLSESVKAKIPLLLHMSICLLDHYVPLIHESACKIASTLIFGLAPSHEKSEETVKLLRNKHALWSYDNLMKKGARSPKTMDLLIRNIISIFSDLDEFQVTWQRIALKWATTCSVRHIACRSFQIFRSLLTFLDQEMLRDMLHRLSNTISDGNVDIQGFAMQILMTLNAIMAELDPTNLISFPQLFWSITACLSSIHEQEFIEVLSCLSKFISKIDLDSPDTVQCLVAIFPSNWEGRFDGLQQIVMTGLRSANSLEITWKFLDKLNLLKDSRIIANTESRLLFALIANLPRFLNAMDRKDFTGIQVAADSLIELANAYKQPSLSRLIDSLAKNKFRSKKDFMSQVVSFISRNYFPSYSAQTLVFLLGLLFNKIGWIRVQTLEILKYVFPLIDLRRPEFIGVGADLISPLLRLLFTEYEAKALEVLDCVPNVSGSKMDKDVLRITMGNKDVKDGDNATTTLFGLPEDSGWSVPMPTMTAATTRHNVHAVFMTCGTGKSDEVSAHGSDDMDAVIEFHADGDYELGRMDTIVEFHADGDYDLGRMDTNDSISVAEEKDASLSHMWAELDNLDSFFTKDTNVPNISSKMGMGIPHGRSDSIETTRTDQTFSFESAPQLYDKKVSVILNRSLSRTPSNVSFKTHLADSFAVKINRNGKPRI</sequence>
<evidence type="ECO:0000256" key="1">
    <source>
        <dbReference type="SAM" id="MobiDB-lite"/>
    </source>
</evidence>
<evidence type="ECO:0000269" key="2">
    <source>
    </source>
</evidence>
<evidence type="ECO:0000269" key="3">
    <source>
    </source>
</evidence>
<evidence type="ECO:0000305" key="4"/>
<evidence type="ECO:0007744" key="5">
    <source>
    </source>
</evidence>
<evidence type="ECO:0007744" key="6">
    <source>
    </source>
</evidence>
<evidence type="ECO:0007744" key="7">
    <source>
    </source>
</evidence>
<evidence type="ECO:0007744" key="8">
    <source>
    </source>
</evidence>
<proteinExistence type="evidence at protein level"/>